<accession>P12282</accession>
<keyword id="KW-0002">3D-structure</keyword>
<keyword id="KW-0067">ATP-binding</keyword>
<keyword id="KW-0479">Metal-binding</keyword>
<keyword id="KW-0501">Molybdenum cofactor biosynthesis</keyword>
<keyword id="KW-0547">Nucleotide-binding</keyword>
<keyword id="KW-0548">Nucleotidyltransferase</keyword>
<keyword id="KW-1185">Reference proteome</keyword>
<keyword id="KW-0808">Transferase</keyword>
<keyword id="KW-0862">Zinc</keyword>
<gene>
    <name type="primary">moeB</name>
    <name type="synonym">chlN</name>
    <name type="ordered locus">b0826</name>
    <name type="ordered locus">JW0810</name>
</gene>
<organism>
    <name type="scientific">Escherichia coli (strain K12)</name>
    <dbReference type="NCBI Taxonomy" id="83333"/>
    <lineage>
        <taxon>Bacteria</taxon>
        <taxon>Pseudomonadati</taxon>
        <taxon>Pseudomonadota</taxon>
        <taxon>Gammaproteobacteria</taxon>
        <taxon>Enterobacterales</taxon>
        <taxon>Enterobacteriaceae</taxon>
        <taxon>Escherichia</taxon>
    </lineage>
</organism>
<reference key="1">
    <citation type="journal article" date="1988" name="J. Bacteriol.">
        <title>Cloning and sequencing of the Escherichia coli chlEN operon involved in molybdopterin biosynthesis.</title>
        <authorList>
            <person name="Nohno T."/>
            <person name="Kasai Y."/>
            <person name="Saito T."/>
        </authorList>
    </citation>
    <scope>NUCLEOTIDE SEQUENCE [GENOMIC DNA]</scope>
    <source>
        <strain>K12 / W3110 / ZK126</strain>
    </source>
</reference>
<reference key="2">
    <citation type="journal article" date="1996" name="DNA Res.">
        <title>A 718-kb DNA sequence of the Escherichia coli K-12 genome corresponding to the 12.7-28.0 min region on the linkage map.</title>
        <authorList>
            <person name="Oshima T."/>
            <person name="Aiba H."/>
            <person name="Baba T."/>
            <person name="Fujita K."/>
            <person name="Hayashi K."/>
            <person name="Honjo A."/>
            <person name="Ikemoto K."/>
            <person name="Inada T."/>
            <person name="Itoh T."/>
            <person name="Kajihara M."/>
            <person name="Kanai K."/>
            <person name="Kashimoto K."/>
            <person name="Kimura S."/>
            <person name="Kitagawa M."/>
            <person name="Makino K."/>
            <person name="Masuda S."/>
            <person name="Miki T."/>
            <person name="Mizobuchi K."/>
            <person name="Mori H."/>
            <person name="Motomura K."/>
            <person name="Nakamura Y."/>
            <person name="Nashimoto H."/>
            <person name="Nishio Y."/>
            <person name="Saito N."/>
            <person name="Sampei G."/>
            <person name="Seki Y."/>
            <person name="Tagami H."/>
            <person name="Takemoto K."/>
            <person name="Wada C."/>
            <person name="Yamamoto Y."/>
            <person name="Yano M."/>
            <person name="Horiuchi T."/>
        </authorList>
    </citation>
    <scope>NUCLEOTIDE SEQUENCE [LARGE SCALE GENOMIC DNA]</scope>
    <source>
        <strain>K12 / W3110 / ATCC 27325 / DSM 5911</strain>
    </source>
</reference>
<reference key="3">
    <citation type="journal article" date="1997" name="Science">
        <title>The complete genome sequence of Escherichia coli K-12.</title>
        <authorList>
            <person name="Blattner F.R."/>
            <person name="Plunkett G. III"/>
            <person name="Bloch C.A."/>
            <person name="Perna N.T."/>
            <person name="Burland V."/>
            <person name="Riley M."/>
            <person name="Collado-Vides J."/>
            <person name="Glasner J.D."/>
            <person name="Rode C.K."/>
            <person name="Mayhew G.F."/>
            <person name="Gregor J."/>
            <person name="Davis N.W."/>
            <person name="Kirkpatrick H.A."/>
            <person name="Goeden M.A."/>
            <person name="Rose D.J."/>
            <person name="Mau B."/>
            <person name="Shao Y."/>
        </authorList>
    </citation>
    <scope>NUCLEOTIDE SEQUENCE [LARGE SCALE GENOMIC DNA]</scope>
    <source>
        <strain>K12 / MG1655 / ATCC 47076</strain>
    </source>
</reference>
<reference key="4">
    <citation type="journal article" date="2006" name="Mol. Syst. Biol.">
        <title>Highly accurate genome sequences of Escherichia coli K-12 strains MG1655 and W3110.</title>
        <authorList>
            <person name="Hayashi K."/>
            <person name="Morooka N."/>
            <person name="Yamamoto Y."/>
            <person name="Fujita K."/>
            <person name="Isono K."/>
            <person name="Choi S."/>
            <person name="Ohtsubo E."/>
            <person name="Baba T."/>
            <person name="Wanner B.L."/>
            <person name="Mori H."/>
            <person name="Horiuchi T."/>
        </authorList>
    </citation>
    <scope>NUCLEOTIDE SEQUENCE [LARGE SCALE GENOMIC DNA]</scope>
    <source>
        <strain>K12 / W3110 / ATCC 27325 / DSM 5911</strain>
    </source>
</reference>
<reference key="5">
    <citation type="journal article" date="2001" name="J. Biol. Chem.">
        <title>A sulfurtransferase is required in the transfer of cysteine sulfur in the in vitro synthesis of molybdopterin from precursor Z in Escherichia coli.</title>
        <authorList>
            <person name="Leimkuehler S."/>
            <person name="Rajagopalan K.V."/>
        </authorList>
    </citation>
    <scope>FUNCTION</scope>
    <scope>SULFUR DONOR</scope>
</reference>
<reference key="6">
    <citation type="journal article" date="2001" name="J. Biol. Chem.">
        <title>Characterization of Escherichia coli MoeB and its involvement in the activation of molybdopterin synthase for the biosynthesis of the molybdenum cofactor.</title>
        <authorList>
            <person name="Leimkuehler S."/>
            <person name="Wuebbens M.M."/>
            <person name="Rajagopalan K.V."/>
        </authorList>
    </citation>
    <scope>FUNCTION</scope>
    <scope>CATALYTIC ACTIVITY</scope>
    <scope>COFACTOR</scope>
    <scope>SUBUNIT</scope>
    <scope>INTERACTION WITH MOAD</scope>
    <scope>MUTAGENESIS OF CYS-44; CYS-128; CYS-142; CYS-172; CYS-175; CYS-187; CYS-231; CYS-244 AND CYS-247</scope>
    <scope>MASS SPECTROMETRY</scope>
    <source>
        <strain>K12 / DH5-alpha</strain>
    </source>
</reference>
<reference key="7">
    <citation type="journal article" date="2001" name="Nature">
        <title>Mechanism of ubiquitin activation revealed by the structure of a bacterial MoeB-MoaD complex.</title>
        <authorList>
            <person name="Lake M.W."/>
            <person name="Wuebbens M.M."/>
            <person name="Rajagopalan K.V."/>
            <person name="Schindelin H."/>
        </authorList>
    </citation>
    <scope>X-RAY CRYSTALLOGRAPHY (1.7 ANGSTROMS) IN COMPLEXES WITH MOAD; ZINC; MOAD AND ATP AND MOAD-ADENYLATE</scope>
    <scope>MUTAGENESIS OF ARG-14; ARG-73 AND ASP-130</scope>
    <scope>REACTION MECHANISM</scope>
</reference>
<dbReference type="EC" id="2.7.7.80"/>
<dbReference type="EMBL" id="M21151">
    <property type="protein sequence ID" value="AAA23580.1"/>
    <property type="molecule type" value="Genomic_DNA"/>
</dbReference>
<dbReference type="EMBL" id="U00096">
    <property type="protein sequence ID" value="AAC73913.1"/>
    <property type="molecule type" value="Genomic_DNA"/>
</dbReference>
<dbReference type="EMBL" id="AP009048">
    <property type="protein sequence ID" value="BAA35514.1"/>
    <property type="molecule type" value="Genomic_DNA"/>
</dbReference>
<dbReference type="PIR" id="B32352">
    <property type="entry name" value="B32352"/>
</dbReference>
<dbReference type="RefSeq" id="NP_415347.1">
    <property type="nucleotide sequence ID" value="NC_000913.3"/>
</dbReference>
<dbReference type="RefSeq" id="WP_000829217.1">
    <property type="nucleotide sequence ID" value="NZ_SSZK01000002.1"/>
</dbReference>
<dbReference type="PDB" id="1JW9">
    <property type="method" value="X-ray"/>
    <property type="resolution" value="1.70 A"/>
    <property type="chains" value="B=1-249"/>
</dbReference>
<dbReference type="PDB" id="1JWA">
    <property type="method" value="X-ray"/>
    <property type="resolution" value="2.90 A"/>
    <property type="chains" value="B=1-249"/>
</dbReference>
<dbReference type="PDB" id="1JWB">
    <property type="method" value="X-ray"/>
    <property type="resolution" value="2.10 A"/>
    <property type="chains" value="B=1-249"/>
</dbReference>
<dbReference type="PDBsum" id="1JW9"/>
<dbReference type="PDBsum" id="1JWA"/>
<dbReference type="PDBsum" id="1JWB"/>
<dbReference type="SMR" id="P12282"/>
<dbReference type="BioGRID" id="4261831">
    <property type="interactions" value="26"/>
</dbReference>
<dbReference type="ComplexPortal" id="CPX-1968">
    <property type="entry name" value="Molybdopterin-synthase adenylyltransferase complex"/>
</dbReference>
<dbReference type="DIP" id="DIP-10241N"/>
<dbReference type="FunCoup" id="P12282">
    <property type="interactions" value="836"/>
</dbReference>
<dbReference type="IntAct" id="P12282">
    <property type="interactions" value="15"/>
</dbReference>
<dbReference type="STRING" id="511145.b0826"/>
<dbReference type="jPOST" id="P12282"/>
<dbReference type="PaxDb" id="511145-b0826"/>
<dbReference type="EnsemblBacteria" id="AAC73913">
    <property type="protein sequence ID" value="AAC73913"/>
    <property type="gene ID" value="b0826"/>
</dbReference>
<dbReference type="GeneID" id="945452"/>
<dbReference type="KEGG" id="ecj:JW0810"/>
<dbReference type="KEGG" id="eco:b0826"/>
<dbReference type="KEGG" id="ecoc:C3026_05185"/>
<dbReference type="PATRIC" id="fig|1411691.4.peg.1452"/>
<dbReference type="EchoBASE" id="EB0152"/>
<dbReference type="eggNOG" id="COG0476">
    <property type="taxonomic scope" value="Bacteria"/>
</dbReference>
<dbReference type="HOGENOM" id="CLU_013325_10_3_6"/>
<dbReference type="InParanoid" id="P12282"/>
<dbReference type="OMA" id="EVACATM"/>
<dbReference type="OrthoDB" id="9804286at2"/>
<dbReference type="PhylomeDB" id="P12282"/>
<dbReference type="BioCyc" id="EcoCyc:EG10154-MONOMER"/>
<dbReference type="BioCyc" id="MetaCyc:EG10154-MONOMER"/>
<dbReference type="BRENDA" id="2.7.7.80">
    <property type="organism ID" value="2026"/>
</dbReference>
<dbReference type="UniPathway" id="UPA00344"/>
<dbReference type="EvolutionaryTrace" id="P12282"/>
<dbReference type="PRO" id="PR:P12282"/>
<dbReference type="Proteomes" id="UP000000625">
    <property type="component" value="Chromosome"/>
</dbReference>
<dbReference type="GO" id="GO:0005737">
    <property type="term" value="C:cytoplasm"/>
    <property type="evidence" value="ECO:0000318"/>
    <property type="project" value="GO_Central"/>
</dbReference>
<dbReference type="GO" id="GO:0005829">
    <property type="term" value="C:cytosol"/>
    <property type="evidence" value="ECO:0000314"/>
    <property type="project" value="EcoCyc"/>
</dbReference>
<dbReference type="GO" id="GO:1990133">
    <property type="term" value="C:molybdopterin adenylyltransferase complex"/>
    <property type="evidence" value="ECO:0000353"/>
    <property type="project" value="ComplexPortal"/>
</dbReference>
<dbReference type="GO" id="GO:0005524">
    <property type="term" value="F:ATP binding"/>
    <property type="evidence" value="ECO:0007669"/>
    <property type="project" value="UniProtKB-KW"/>
</dbReference>
<dbReference type="GO" id="GO:0046872">
    <property type="term" value="F:metal ion binding"/>
    <property type="evidence" value="ECO:0007669"/>
    <property type="project" value="UniProtKB-KW"/>
</dbReference>
<dbReference type="GO" id="GO:0061605">
    <property type="term" value="F:molybdopterin-synthase adenylyltransferase activity"/>
    <property type="evidence" value="ECO:0000314"/>
    <property type="project" value="EcoCyc"/>
</dbReference>
<dbReference type="GO" id="GO:0016779">
    <property type="term" value="F:nucleotidyltransferase activity"/>
    <property type="evidence" value="ECO:0000318"/>
    <property type="project" value="GO_Central"/>
</dbReference>
<dbReference type="GO" id="GO:0042803">
    <property type="term" value="F:protein homodimerization activity"/>
    <property type="evidence" value="ECO:0000353"/>
    <property type="project" value="EcoCyc"/>
</dbReference>
<dbReference type="GO" id="GO:0008146">
    <property type="term" value="F:sulfotransferase activity"/>
    <property type="evidence" value="ECO:0000318"/>
    <property type="project" value="GO_Central"/>
</dbReference>
<dbReference type="GO" id="GO:0004792">
    <property type="term" value="F:thiosulfate-cyanide sulfurtransferase activity"/>
    <property type="evidence" value="ECO:0000318"/>
    <property type="project" value="GO_Central"/>
</dbReference>
<dbReference type="GO" id="GO:0008641">
    <property type="term" value="F:ubiquitin-like modifier activating enzyme activity"/>
    <property type="evidence" value="ECO:0007669"/>
    <property type="project" value="InterPro"/>
</dbReference>
<dbReference type="GO" id="GO:0006777">
    <property type="term" value="P:Mo-molybdopterin cofactor biosynthetic process"/>
    <property type="evidence" value="ECO:0000314"/>
    <property type="project" value="ComplexPortal"/>
</dbReference>
<dbReference type="CDD" id="cd00757">
    <property type="entry name" value="ThiF_MoeB_HesA_family"/>
    <property type="match status" value="1"/>
</dbReference>
<dbReference type="FunFam" id="3.40.50.720:FF:000033">
    <property type="entry name" value="Adenylyltransferase and sulfurtransferase MOCS3"/>
    <property type="match status" value="1"/>
</dbReference>
<dbReference type="Gene3D" id="3.40.50.720">
    <property type="entry name" value="NAD(P)-binding Rossmann-like Domain"/>
    <property type="match status" value="1"/>
</dbReference>
<dbReference type="InterPro" id="IPR012730">
    <property type="entry name" value="Mopterin_Synthase_Sase_MoeB"/>
</dbReference>
<dbReference type="InterPro" id="IPR045886">
    <property type="entry name" value="ThiF/MoeB/HesA"/>
</dbReference>
<dbReference type="InterPro" id="IPR000594">
    <property type="entry name" value="ThiF_NAD_FAD-bd"/>
</dbReference>
<dbReference type="InterPro" id="IPR035985">
    <property type="entry name" value="Ubiquitin-activating_enz"/>
</dbReference>
<dbReference type="NCBIfam" id="TIGR02355">
    <property type="entry name" value="moeB"/>
    <property type="match status" value="1"/>
</dbReference>
<dbReference type="NCBIfam" id="NF004281">
    <property type="entry name" value="PRK05690.1"/>
    <property type="match status" value="1"/>
</dbReference>
<dbReference type="PANTHER" id="PTHR10953:SF194">
    <property type="entry name" value="MOLYBDOPTERIN-SYNTHASE ADENYLYLTRANSFERASE"/>
    <property type="match status" value="1"/>
</dbReference>
<dbReference type="PANTHER" id="PTHR10953">
    <property type="entry name" value="UBIQUITIN-ACTIVATING ENZYME E1"/>
    <property type="match status" value="1"/>
</dbReference>
<dbReference type="Pfam" id="PF00899">
    <property type="entry name" value="ThiF"/>
    <property type="match status" value="1"/>
</dbReference>
<dbReference type="SUPFAM" id="SSF69572">
    <property type="entry name" value="Activating enzymes of the ubiquitin-like proteins"/>
    <property type="match status" value="1"/>
</dbReference>
<feature type="chain" id="PRO_0000120575" description="Molybdopterin-synthase adenylyltransferase">
    <location>
        <begin position="1"/>
        <end position="249"/>
    </location>
</feature>
<feature type="binding site">
    <location>
        <position position="41"/>
    </location>
    <ligand>
        <name>ATP</name>
        <dbReference type="ChEBI" id="CHEBI:30616"/>
    </ligand>
</feature>
<feature type="binding site">
    <location>
        <position position="62"/>
    </location>
    <ligand>
        <name>ATP</name>
        <dbReference type="ChEBI" id="CHEBI:30616"/>
    </ligand>
</feature>
<feature type="binding site">
    <location>
        <begin position="69"/>
        <end position="73"/>
    </location>
    <ligand>
        <name>ATP</name>
        <dbReference type="ChEBI" id="CHEBI:30616"/>
    </ligand>
</feature>
<feature type="binding site">
    <location>
        <position position="86"/>
    </location>
    <ligand>
        <name>ATP</name>
        <dbReference type="ChEBI" id="CHEBI:30616"/>
    </ligand>
</feature>
<feature type="binding site">
    <location>
        <begin position="130"/>
        <end position="131"/>
    </location>
    <ligand>
        <name>ATP</name>
        <dbReference type="ChEBI" id="CHEBI:30616"/>
    </ligand>
</feature>
<feature type="binding site">
    <location>
        <position position="172"/>
    </location>
    <ligand>
        <name>Zn(2+)</name>
        <dbReference type="ChEBI" id="CHEBI:29105"/>
    </ligand>
</feature>
<feature type="binding site">
    <location>
        <position position="175"/>
    </location>
    <ligand>
        <name>Zn(2+)</name>
        <dbReference type="ChEBI" id="CHEBI:29105"/>
    </ligand>
</feature>
<feature type="binding site">
    <location>
        <position position="244"/>
    </location>
    <ligand>
        <name>Zn(2+)</name>
        <dbReference type="ChEBI" id="CHEBI:29105"/>
    </ligand>
</feature>
<feature type="binding site">
    <location>
        <position position="247"/>
    </location>
    <ligand>
        <name>Zn(2+)</name>
        <dbReference type="ChEBI" id="CHEBI:29105"/>
    </ligand>
</feature>
<feature type="mutagenesis site" description="No effect." evidence="3">
    <original>R</original>
    <variation>A</variation>
    <variation>K</variation>
    <location>
        <position position="14"/>
    </location>
</feature>
<feature type="mutagenesis site" description="No activity; when associated with A-73." evidence="3">
    <original>R</original>
    <variation>A</variation>
    <location>
        <position position="14"/>
    </location>
</feature>
<feature type="mutagenesis site" description="No effect." evidence="2">
    <original>C</original>
    <variation>A</variation>
    <location>
        <position position="44"/>
    </location>
</feature>
<feature type="mutagenesis site" description="No effect. No activity; when associated with A-14." evidence="3">
    <original>R</original>
    <variation>A</variation>
    <location>
        <position position="73"/>
    </location>
</feature>
<feature type="mutagenesis site" description="Substantially reduced activity." evidence="3">
    <original>R</original>
    <variation>K</variation>
    <location>
        <position position="73"/>
    </location>
</feature>
<feature type="mutagenesis site" description="No effect." evidence="2">
    <original>C</original>
    <variation>A</variation>
    <location>
        <position position="128"/>
    </location>
</feature>
<feature type="mutagenesis site" description="No activity." evidence="2">
    <original>C</original>
    <variation>Y</variation>
    <location>
        <position position="128"/>
    </location>
</feature>
<feature type="mutagenesis site" description="No activity." evidence="3">
    <original>D</original>
    <variation>A</variation>
    <location>
        <position position="130"/>
    </location>
</feature>
<feature type="mutagenesis site" description="Substantially reduced activity." evidence="3">
    <original>D</original>
    <variation>E</variation>
    <location>
        <position position="130"/>
    </location>
</feature>
<feature type="mutagenesis site" description="No effect." evidence="2">
    <original>C</original>
    <variation>A</variation>
    <location>
        <position position="142"/>
    </location>
</feature>
<feature type="mutagenesis site" description="No zinc bound and no enzyme activity." evidence="2">
    <original>C</original>
    <variation>A</variation>
    <location>
        <position position="172"/>
    </location>
</feature>
<feature type="mutagenesis site" description="No zinc bound and no enzyme activity." evidence="2">
    <original>C</original>
    <variation>A</variation>
    <location>
        <position position="175"/>
    </location>
</feature>
<feature type="mutagenesis site" description="No effect." evidence="2">
    <original>C</original>
    <variation>A</variation>
    <location>
        <position position="187"/>
    </location>
</feature>
<feature type="mutagenesis site" description="No effect." evidence="2">
    <original>C</original>
    <variation>A</variation>
    <location>
        <position position="231"/>
    </location>
</feature>
<feature type="mutagenesis site" description="No zinc bound and almost no enzyme activity." evidence="2">
    <original>C</original>
    <variation>A</variation>
    <location>
        <position position="244"/>
    </location>
</feature>
<feature type="mutagenesis site" description="No zinc bound and almost no enzyme activity." evidence="2">
    <original>C</original>
    <variation>A</variation>
    <location>
        <position position="247"/>
    </location>
</feature>
<feature type="helix" evidence="5">
    <location>
        <begin position="6"/>
        <end position="11"/>
    </location>
</feature>
<feature type="helix" evidence="5">
    <location>
        <begin position="13"/>
        <end position="16"/>
    </location>
</feature>
<feature type="turn" evidence="5">
    <location>
        <begin position="19"/>
        <end position="21"/>
    </location>
</feature>
<feature type="helix" evidence="5">
    <location>
        <begin position="22"/>
        <end position="31"/>
    </location>
</feature>
<feature type="strand" evidence="5">
    <location>
        <begin position="33"/>
        <end position="37"/>
    </location>
</feature>
<feature type="helix" evidence="5">
    <location>
        <begin position="41"/>
        <end position="53"/>
    </location>
</feature>
<feature type="strand" evidence="5">
    <location>
        <begin position="56"/>
        <end position="61"/>
    </location>
</feature>
<feature type="helix" evidence="5">
    <location>
        <begin position="68"/>
        <end position="72"/>
    </location>
</feature>
<feature type="helix" evidence="5">
    <location>
        <begin position="79"/>
        <end position="81"/>
    </location>
</feature>
<feature type="helix" evidence="5">
    <location>
        <begin position="86"/>
        <end position="97"/>
    </location>
</feature>
<feature type="strand" evidence="5">
    <location>
        <begin position="101"/>
        <end position="106"/>
    </location>
</feature>
<feature type="helix" evidence="5">
    <location>
        <begin position="112"/>
        <end position="120"/>
    </location>
</feature>
<feature type="strand" evidence="5">
    <location>
        <begin position="122"/>
        <end position="127"/>
    </location>
</feature>
<feature type="helix" evidence="5">
    <location>
        <begin position="132"/>
        <end position="145"/>
    </location>
</feature>
<feature type="strand" evidence="5">
    <location>
        <begin position="149"/>
        <end position="156"/>
    </location>
</feature>
<feature type="strand" evidence="5">
    <location>
        <begin position="158"/>
        <end position="164"/>
    </location>
</feature>
<feature type="helix" evidence="5">
    <location>
        <begin position="173"/>
        <end position="177"/>
    </location>
</feature>
<feature type="helix" evidence="5">
    <location>
        <begin position="194"/>
        <end position="213"/>
    </location>
</feature>
<feature type="strand" evidence="5">
    <location>
        <begin position="220"/>
        <end position="227"/>
    </location>
</feature>
<feature type="turn" evidence="5">
    <location>
        <begin position="228"/>
        <end position="231"/>
    </location>
</feature>
<feature type="strand" evidence="5">
    <location>
        <begin position="232"/>
        <end position="237"/>
    </location>
</feature>
<feature type="turn" evidence="5">
    <location>
        <begin position="245"/>
        <end position="247"/>
    </location>
</feature>
<proteinExistence type="evidence at protein level"/>
<name>MOEB_ECOLI</name>
<sequence>MAELSDQEMLRYNRQIILRGFDFDGQEALKDSRVLIVGLGGLGCAASQYLASAGVGNLTLLDFDTVSLSNLQRQTLHSDATVGQPKVESARDALTRINPHIAITPVNALLDDAELAALIAEHDLVLDCTDNVAVRNQLNAGCFAAKVPLVSGAAIRMEGQITVFTYQDGEPCYRCLSRLFGENALTCVEAGVMAPLIGVIGSLQAMEAIKMLAGYGKPASGKIVMYDAMTCQFREMKLMRNPGCEVCGQ</sequence>
<comment type="function">
    <text evidence="1 2">Catalyzes the adenylation by ATP of the carboxyl group of the C-terminal glycine of sulfur carrier protein MoaD.</text>
</comment>
<comment type="catalytic activity">
    <reaction evidence="2">
        <text>[molybdopterin-synthase sulfur-carrier protein]-C-terminal Gly-Gly + ATP + H(+) = [molybdopterin-synthase sulfur-carrier protein]-C-terminal Gly-Gly-AMP + diphosphate</text>
        <dbReference type="Rhea" id="RHEA:43616"/>
        <dbReference type="Rhea" id="RHEA-COMP:12159"/>
        <dbReference type="Rhea" id="RHEA-COMP:12202"/>
        <dbReference type="ChEBI" id="CHEBI:15378"/>
        <dbReference type="ChEBI" id="CHEBI:30616"/>
        <dbReference type="ChEBI" id="CHEBI:33019"/>
        <dbReference type="ChEBI" id="CHEBI:90618"/>
        <dbReference type="ChEBI" id="CHEBI:90778"/>
        <dbReference type="EC" id="2.7.7.80"/>
    </reaction>
</comment>
<comment type="cofactor">
    <cofactor evidence="2">
        <name>Zn(2+)</name>
        <dbReference type="ChEBI" id="CHEBI:29105"/>
    </cofactor>
    <text evidence="2">Binds 1 zinc ion per subunit.</text>
</comment>
<comment type="pathway">
    <text>Cofactor biosynthesis; molybdopterin biosynthesis.</text>
</comment>
<comment type="subunit">
    <text evidence="2">Homodimer. Forms a stable heterotetrameric complex of 2 MoeB and 2 MoaD during adenylation of MoaD.</text>
</comment>
<comment type="interaction">
    <interactant intactId="EBI-554435">
        <id>P12282</id>
    </interactant>
    <interactant intactId="EBI-542092">
        <id>P0A6Y8</id>
        <label>dnaK</label>
    </interactant>
    <organismsDiffer>false</organismsDiffer>
    <experiments>2</experiments>
</comment>
<comment type="mass spectrometry"/>
<comment type="similarity">
    <text evidence="4">Belongs to the HesA/MoeB/ThiF family.</text>
</comment>
<evidence type="ECO:0000269" key="1">
    <source>
    </source>
</evidence>
<evidence type="ECO:0000269" key="2">
    <source>
    </source>
</evidence>
<evidence type="ECO:0000269" key="3">
    <source>
    </source>
</evidence>
<evidence type="ECO:0000305" key="4"/>
<evidence type="ECO:0007829" key="5">
    <source>
        <dbReference type="PDB" id="1JW9"/>
    </source>
</evidence>
<protein>
    <recommendedName>
        <fullName>Molybdopterin-synthase adenylyltransferase</fullName>
        <ecNumber>2.7.7.80</ecNumber>
    </recommendedName>
    <alternativeName>
        <fullName>MoaD protein adenylase</fullName>
    </alternativeName>
    <alternativeName>
        <fullName>Molybdopterin-converting factor subunit 1 adenylase</fullName>
    </alternativeName>
    <alternativeName>
        <fullName>Sulfur carrier protein MoaD adenylyltransferase</fullName>
    </alternativeName>
</protein>